<keyword id="KW-0007">Acetylation</keyword>
<keyword id="KW-0963">Cytoplasm</keyword>
<keyword id="KW-0903">Direct protein sequencing</keyword>
<keyword id="KW-0539">Nucleus</keyword>
<keyword id="KW-0597">Phosphoprotein</keyword>
<keyword id="KW-1185">Reference proteome</keyword>
<keyword id="KW-0833">Ubl conjugation pathway</keyword>
<dbReference type="EMBL" id="BC079007">
    <property type="protein sequence ID" value="AAH79007.1"/>
    <property type="molecule type" value="mRNA"/>
</dbReference>
<dbReference type="RefSeq" id="NP_001004208.1">
    <property type="nucleotide sequence ID" value="NM_001004208.1"/>
</dbReference>
<dbReference type="BMRB" id="Q6AYK6"/>
<dbReference type="SMR" id="Q6AYK6"/>
<dbReference type="FunCoup" id="Q6AYK6">
    <property type="interactions" value="3309"/>
</dbReference>
<dbReference type="STRING" id="10116.ENSRNOP00000003586"/>
<dbReference type="iPTMnet" id="Q6AYK6"/>
<dbReference type="PhosphoSitePlus" id="Q6AYK6"/>
<dbReference type="SwissPalm" id="Q6AYK6"/>
<dbReference type="jPOST" id="Q6AYK6"/>
<dbReference type="PaxDb" id="10116-ENSRNOP00000003586"/>
<dbReference type="Ensembl" id="ENSRNOT00000003586.6">
    <property type="protein sequence ID" value="ENSRNOP00000003586.3"/>
    <property type="gene ID" value="ENSRNOG00000002572.6"/>
</dbReference>
<dbReference type="GeneID" id="289144"/>
<dbReference type="KEGG" id="rno:289144"/>
<dbReference type="UCSC" id="RGD:1303146">
    <property type="organism name" value="rat"/>
</dbReference>
<dbReference type="AGR" id="RGD:1303146"/>
<dbReference type="CTD" id="27101"/>
<dbReference type="RGD" id="1303146">
    <property type="gene designation" value="Cacybp"/>
</dbReference>
<dbReference type="eggNOG" id="KOG3260">
    <property type="taxonomic scope" value="Eukaryota"/>
</dbReference>
<dbReference type="GeneTree" id="ENSGT00390000016470"/>
<dbReference type="HOGENOM" id="CLU_081441_2_0_1"/>
<dbReference type="InParanoid" id="Q6AYK6"/>
<dbReference type="OrthoDB" id="39734at9989"/>
<dbReference type="PhylomeDB" id="Q6AYK6"/>
<dbReference type="TreeFam" id="TF323891"/>
<dbReference type="PRO" id="PR:Q6AYK6"/>
<dbReference type="Proteomes" id="UP000002494">
    <property type="component" value="Chromosome 13"/>
</dbReference>
<dbReference type="Bgee" id="ENSRNOG00000002572">
    <property type="expression patterns" value="Expressed in cerebellum and 19 other cell types or tissues"/>
</dbReference>
<dbReference type="ExpressionAtlas" id="Q6AYK6">
    <property type="expression patterns" value="baseline and differential"/>
</dbReference>
<dbReference type="GO" id="GO:0030877">
    <property type="term" value="C:beta-catenin destruction complex"/>
    <property type="evidence" value="ECO:0000266"/>
    <property type="project" value="RGD"/>
</dbReference>
<dbReference type="GO" id="GO:0044297">
    <property type="term" value="C:cell body"/>
    <property type="evidence" value="ECO:0000314"/>
    <property type="project" value="RGD"/>
</dbReference>
<dbReference type="GO" id="GO:0005737">
    <property type="term" value="C:cytoplasm"/>
    <property type="evidence" value="ECO:0000266"/>
    <property type="project" value="RGD"/>
</dbReference>
<dbReference type="GO" id="GO:0005641">
    <property type="term" value="C:nuclear envelope lumen"/>
    <property type="evidence" value="ECO:0000266"/>
    <property type="project" value="RGD"/>
</dbReference>
<dbReference type="GO" id="GO:0005634">
    <property type="term" value="C:nucleus"/>
    <property type="evidence" value="ECO:0000318"/>
    <property type="project" value="GO_Central"/>
</dbReference>
<dbReference type="GO" id="GO:0019005">
    <property type="term" value="C:SCF ubiquitin ligase complex"/>
    <property type="evidence" value="ECO:0000266"/>
    <property type="project" value="RGD"/>
</dbReference>
<dbReference type="GO" id="GO:0060090">
    <property type="term" value="F:molecular adaptor activity"/>
    <property type="evidence" value="ECO:0000266"/>
    <property type="project" value="RGD"/>
</dbReference>
<dbReference type="GO" id="GO:0019904">
    <property type="term" value="F:protein domain specific binding"/>
    <property type="evidence" value="ECO:0000266"/>
    <property type="project" value="RGD"/>
</dbReference>
<dbReference type="GO" id="GO:0042803">
    <property type="term" value="F:protein homodimerization activity"/>
    <property type="evidence" value="ECO:0000266"/>
    <property type="project" value="RGD"/>
</dbReference>
<dbReference type="GO" id="GO:0044548">
    <property type="term" value="F:S100 protein binding"/>
    <property type="evidence" value="ECO:0007669"/>
    <property type="project" value="InterPro"/>
</dbReference>
<dbReference type="GO" id="GO:0015631">
    <property type="term" value="F:tubulin binding"/>
    <property type="evidence" value="ECO:0007669"/>
    <property type="project" value="InterPro"/>
</dbReference>
<dbReference type="GO" id="GO:0031625">
    <property type="term" value="F:ubiquitin protein ligase binding"/>
    <property type="evidence" value="ECO:0000266"/>
    <property type="project" value="RGD"/>
</dbReference>
<dbReference type="GO" id="GO:0055007">
    <property type="term" value="P:cardiac muscle cell differentiation"/>
    <property type="evidence" value="ECO:0000314"/>
    <property type="project" value="RGD"/>
</dbReference>
<dbReference type="GO" id="GO:0071277">
    <property type="term" value="P:cellular response to calcium ion"/>
    <property type="evidence" value="ECO:0000270"/>
    <property type="project" value="RGD"/>
</dbReference>
<dbReference type="GO" id="GO:1990830">
    <property type="term" value="P:cellular response to leukemia inhibitory factor"/>
    <property type="evidence" value="ECO:0000266"/>
    <property type="project" value="RGD"/>
</dbReference>
<dbReference type="GO" id="GO:0007507">
    <property type="term" value="P:heart development"/>
    <property type="evidence" value="ECO:0000270"/>
    <property type="project" value="RGD"/>
</dbReference>
<dbReference type="GO" id="GO:0045740">
    <property type="term" value="P:positive regulation of DNA replication"/>
    <property type="evidence" value="ECO:0000314"/>
    <property type="project" value="RGD"/>
</dbReference>
<dbReference type="GO" id="GO:0060416">
    <property type="term" value="P:response to growth hormone"/>
    <property type="evidence" value="ECO:0000315"/>
    <property type="project" value="RGD"/>
</dbReference>
<dbReference type="CDD" id="cd06468">
    <property type="entry name" value="p23_CacyBP"/>
    <property type="match status" value="1"/>
</dbReference>
<dbReference type="FunFam" id="2.60.40.790:FF:000006">
    <property type="entry name" value="calcyclin-binding protein-like"/>
    <property type="match status" value="1"/>
</dbReference>
<dbReference type="FunFam" id="4.10.860.10:FF:000006">
    <property type="entry name" value="calcyclin-binding protein-like"/>
    <property type="match status" value="1"/>
</dbReference>
<dbReference type="Gene3D" id="2.60.40.790">
    <property type="match status" value="1"/>
</dbReference>
<dbReference type="Gene3D" id="4.10.860.10">
    <property type="entry name" value="UVR domain"/>
    <property type="match status" value="1"/>
</dbReference>
<dbReference type="InterPro" id="IPR037201">
    <property type="entry name" value="CacyBP_N"/>
</dbReference>
<dbReference type="InterPro" id="IPR052289">
    <property type="entry name" value="Calcyclin-binding_UBL-bridge"/>
</dbReference>
<dbReference type="InterPro" id="IPR037893">
    <property type="entry name" value="CS_CacyBP"/>
</dbReference>
<dbReference type="InterPro" id="IPR007052">
    <property type="entry name" value="CS_dom"/>
</dbReference>
<dbReference type="InterPro" id="IPR008978">
    <property type="entry name" value="HSP20-like_chaperone"/>
</dbReference>
<dbReference type="InterPro" id="IPR007699">
    <property type="entry name" value="SGS_dom"/>
</dbReference>
<dbReference type="InterPro" id="IPR015120">
    <property type="entry name" value="Siah-Interact_N"/>
</dbReference>
<dbReference type="PANTHER" id="PTHR13164:SF3">
    <property type="entry name" value="CALCYCLIN-BINDING PROTEIN"/>
    <property type="match status" value="1"/>
</dbReference>
<dbReference type="PANTHER" id="PTHR13164">
    <property type="entry name" value="CALICYLIN BINDING PROTEIN"/>
    <property type="match status" value="1"/>
</dbReference>
<dbReference type="Pfam" id="PF04969">
    <property type="entry name" value="CS"/>
    <property type="match status" value="1"/>
</dbReference>
<dbReference type="Pfam" id="PF05002">
    <property type="entry name" value="SGS"/>
    <property type="match status" value="1"/>
</dbReference>
<dbReference type="Pfam" id="PF09032">
    <property type="entry name" value="Siah-Interact_N"/>
    <property type="match status" value="1"/>
</dbReference>
<dbReference type="SUPFAM" id="SSF140106">
    <property type="entry name" value="Calcyclin-binding protein-like"/>
    <property type="match status" value="1"/>
</dbReference>
<dbReference type="SUPFAM" id="SSF49764">
    <property type="entry name" value="HSP20-like chaperones"/>
    <property type="match status" value="1"/>
</dbReference>
<dbReference type="PROSITE" id="PS51203">
    <property type="entry name" value="CS"/>
    <property type="match status" value="1"/>
</dbReference>
<dbReference type="PROSITE" id="PS51048">
    <property type="entry name" value="SGS"/>
    <property type="match status" value="1"/>
</dbReference>
<accession>Q6AYK6</accession>
<protein>
    <recommendedName>
        <fullName>Calcyclin-binding protein</fullName>
        <shortName>CacyBP</shortName>
    </recommendedName>
</protein>
<name>CYBP_RAT</name>
<sequence length="229" mass="26541">MASALEELQKDLEEVKVLLEKSTRKRLRDTLTNEKSKIETELRNKMQQKSQKKPEFDNEKPAAVVAPLTTGYTVKISNYGWDQSDKFVKIYITLTGVHQVPAENVQVHFTERSFDLLVKNLNGKNYSMIVNNLLKPISVESSSKKVKTDTVIILCRKKAENTRWDYLTQVEKECKEKEKPSYDTEADPSEGLMNVLKKIYEDGDDDMKRTINKAWVESREKQAREDTEF</sequence>
<comment type="function">
    <text evidence="1">May be involved in calcium-dependent ubiquitination and subsequent proteasomal degradation of target proteins. Probably serves as a molecular bridge in ubiquitin E3 complexes. Participates in the ubiquitin-mediated degradation of beta-catenin (CTNNB1) (By similarity).</text>
</comment>
<comment type="subunit">
    <text evidence="1 6">Component of some large E3 complex at least composed of UBE2D1, SIAH1, CACYBP/SIP, SKP1, APC and TBL1X. Interacts directly with SIAH1, SIAH2 and SKP1 (By similarity). Interacts with protein of the S100 family S100A1, S100A6, S100B, S100P and S100A12 in a calcium-dependent manner.</text>
</comment>
<comment type="subcellular location">
    <subcellularLocation>
        <location evidence="1">Nucleus</location>
    </subcellularLocation>
    <subcellularLocation>
        <location evidence="1">Cytoplasm</location>
    </subcellularLocation>
</comment>
<comment type="PTM">
    <text evidence="1">Phosphorylated on serine residues. Phosphorylated upon induction by RA or at high calcium concentrations (By similarity).</text>
</comment>
<evidence type="ECO:0000250" key="1"/>
<evidence type="ECO:0000250" key="2">
    <source>
        <dbReference type="UniProtKB" id="Q9HB71"/>
    </source>
</evidence>
<evidence type="ECO:0000255" key="3">
    <source>
        <dbReference type="PROSITE-ProRule" id="PRU00386"/>
    </source>
</evidence>
<evidence type="ECO:0000255" key="4">
    <source>
        <dbReference type="PROSITE-ProRule" id="PRU00547"/>
    </source>
</evidence>
<evidence type="ECO:0000256" key="5">
    <source>
        <dbReference type="SAM" id="MobiDB-lite"/>
    </source>
</evidence>
<evidence type="ECO:0000269" key="6">
    <source>
    </source>
</evidence>
<organism>
    <name type="scientific">Rattus norvegicus</name>
    <name type="common">Rat</name>
    <dbReference type="NCBI Taxonomy" id="10116"/>
    <lineage>
        <taxon>Eukaryota</taxon>
        <taxon>Metazoa</taxon>
        <taxon>Chordata</taxon>
        <taxon>Craniata</taxon>
        <taxon>Vertebrata</taxon>
        <taxon>Euteleostomi</taxon>
        <taxon>Mammalia</taxon>
        <taxon>Eutheria</taxon>
        <taxon>Euarchontoglires</taxon>
        <taxon>Glires</taxon>
        <taxon>Rodentia</taxon>
        <taxon>Myomorpha</taxon>
        <taxon>Muroidea</taxon>
        <taxon>Muridae</taxon>
        <taxon>Murinae</taxon>
        <taxon>Rattus</taxon>
    </lineage>
</organism>
<proteinExistence type="evidence at protein level"/>
<reference key="1">
    <citation type="journal article" date="2004" name="Genome Res.">
        <title>The status, quality, and expansion of the NIH full-length cDNA project: the Mammalian Gene Collection (MGC).</title>
        <authorList>
            <consortium name="The MGC Project Team"/>
        </authorList>
    </citation>
    <scope>NUCLEOTIDE SEQUENCE [LARGE SCALE MRNA]</scope>
    <source>
        <tissue>Testis</tissue>
    </source>
</reference>
<reference key="2">
    <citation type="submission" date="2007-07" db="UniProtKB">
        <authorList>
            <person name="Lubec G."/>
            <person name="Afjehi-Sadat L."/>
            <person name="Kang S.U."/>
        </authorList>
    </citation>
    <scope>PROTEIN SEQUENCE OF 38-43 AND 53-75</scope>
    <scope>IDENTIFICATION BY MASS SPECTROMETRY</scope>
    <source>
        <strain>Sprague-Dawley</strain>
        <tissue>Brain</tissue>
        <tissue>Spinal cord</tissue>
    </source>
</reference>
<reference key="3">
    <citation type="journal article" date="2002" name="J. Biol. Chem.">
        <title>CacyBP/SIP, a calcyclin and Siah-1-interacting protein, binds EF-hand proteins of the S100 family.</title>
        <authorList>
            <person name="Filipek A."/>
            <person name="Jastrzebska B."/>
            <person name="Nowotny M."/>
            <person name="Kuznicki J."/>
        </authorList>
    </citation>
    <scope>INTERACTION WITH S100A1; S100A6; S100B; S100P AND S100A12</scope>
</reference>
<feature type="initiator methionine" description="Removed" evidence="2">
    <location>
        <position position="1"/>
    </location>
</feature>
<feature type="chain" id="PRO_0000271391" description="Calcyclin-binding protein">
    <location>
        <begin position="2"/>
        <end position="229"/>
    </location>
</feature>
<feature type="domain" description="CS" evidence="4">
    <location>
        <begin position="74"/>
        <end position="168"/>
    </location>
</feature>
<feature type="domain" description="SGS" evidence="3">
    <location>
        <begin position="169"/>
        <end position="229"/>
    </location>
</feature>
<feature type="region of interest" description="Interaction with SIAH1" evidence="1">
    <location>
        <begin position="2"/>
        <end position="81"/>
    </location>
</feature>
<feature type="region of interest" description="Disordered" evidence="5">
    <location>
        <begin position="38"/>
        <end position="59"/>
    </location>
</feature>
<feature type="region of interest" description="Interaction with SKP1" evidence="1">
    <location>
        <begin position="74"/>
        <end position="229"/>
    </location>
</feature>
<feature type="region of interest" description="Interaction with S100A6" evidence="1">
    <location>
        <begin position="155"/>
        <end position="229"/>
    </location>
</feature>
<feature type="modified residue" description="N-acetylalanine" evidence="2">
    <location>
        <position position="2"/>
    </location>
</feature>
<feature type="modified residue" description="Phosphoserine" evidence="2">
    <location>
        <position position="3"/>
    </location>
</feature>
<feature type="modified residue" description="N6-acetyllysine" evidence="2">
    <location>
        <position position="10"/>
    </location>
</feature>
<feature type="modified residue" description="N6-acetyllysine" evidence="2">
    <location>
        <position position="21"/>
    </location>
</feature>
<feature type="modified residue" description="Phosphoserine" evidence="2">
    <location>
        <position position="36"/>
    </location>
</feature>
<feature type="modified residue" description="N6-acetyllysine" evidence="2">
    <location>
        <position position="86"/>
    </location>
</feature>
<feature type="modified residue" description="N6-acetyllysine" evidence="2">
    <location>
        <position position="119"/>
    </location>
</feature>
<gene>
    <name type="primary">Cacybp</name>
</gene>